<feature type="chain" id="PRO_0000188288" description="ATP synthase epsilon chain, chloroplastic">
    <location>
        <begin position="1"/>
        <end position="134"/>
    </location>
</feature>
<reference key="1">
    <citation type="journal article" date="1995" name="Plant Mol. Biol. Rep.">
        <title>Complete nucleotide sequence of the Porphyra purpurea chloroplast genome.</title>
        <authorList>
            <person name="Reith M.E."/>
            <person name="Munholland J."/>
        </authorList>
    </citation>
    <scope>NUCLEOTIDE SEQUENCE [LARGE SCALE GENOMIC DNA]</scope>
    <source>
        <strain>Avonport</strain>
    </source>
</reference>
<geneLocation type="chloroplast"/>
<protein>
    <recommendedName>
        <fullName evidence="1">ATP synthase epsilon chain, chloroplastic</fullName>
    </recommendedName>
    <alternativeName>
        <fullName evidence="1">ATP synthase F1 sector epsilon subunit</fullName>
    </alternativeName>
    <alternativeName>
        <fullName evidence="1">F-ATPase epsilon subunit</fullName>
    </alternativeName>
</protein>
<sequence>MTLNIRIIAPDRTVWDAEAQEIILPSSTGQLGILTGHAPLLTALDIGVMRVRVDKEWMPIVLLGGFAEIENNQLTILVNGAEEASQIDLVEAEKNLDTATQLLNDASSSKEKIEATQNIRKARARVQAATAASA</sequence>
<comment type="function">
    <text evidence="1">Produces ATP from ADP in the presence of a proton gradient across the membrane.</text>
</comment>
<comment type="subunit">
    <text evidence="1">F-type ATPases have 2 components, CF(1) - the catalytic core - and CF(0) - the membrane proton channel. CF(1) has five subunits: alpha(3), beta(3), gamma(1), delta(1), epsilon(1). CF(0) has three main subunits: a, b and c.</text>
</comment>
<comment type="subcellular location">
    <subcellularLocation>
        <location evidence="1">Plastid</location>
        <location evidence="1">Chloroplast thylakoid membrane</location>
        <topology evidence="1">Peripheral membrane protein</topology>
    </subcellularLocation>
</comment>
<comment type="similarity">
    <text evidence="1">Belongs to the ATPase epsilon chain family.</text>
</comment>
<proteinExistence type="inferred from homology"/>
<gene>
    <name evidence="1" type="primary">atpE</name>
</gene>
<keyword id="KW-0066">ATP synthesis</keyword>
<keyword id="KW-0139">CF(1)</keyword>
<keyword id="KW-0150">Chloroplast</keyword>
<keyword id="KW-0375">Hydrogen ion transport</keyword>
<keyword id="KW-0406">Ion transport</keyword>
<keyword id="KW-0472">Membrane</keyword>
<keyword id="KW-0934">Plastid</keyword>
<keyword id="KW-0793">Thylakoid</keyword>
<keyword id="KW-0813">Transport</keyword>
<name>ATPE_PORPU</name>
<evidence type="ECO:0000255" key="1">
    <source>
        <dbReference type="HAMAP-Rule" id="MF_00530"/>
    </source>
</evidence>
<accession>P51260</accession>
<organism>
    <name type="scientific">Porphyra purpurea</name>
    <name type="common">Red seaweed</name>
    <name type="synonym">Ulva purpurea</name>
    <dbReference type="NCBI Taxonomy" id="2787"/>
    <lineage>
        <taxon>Eukaryota</taxon>
        <taxon>Rhodophyta</taxon>
        <taxon>Bangiophyceae</taxon>
        <taxon>Bangiales</taxon>
        <taxon>Bangiaceae</taxon>
        <taxon>Porphyra</taxon>
    </lineage>
</organism>
<dbReference type="EMBL" id="U38804">
    <property type="protein sequence ID" value="AAC08146.1"/>
    <property type="molecule type" value="Genomic_DNA"/>
</dbReference>
<dbReference type="PIR" id="S73181">
    <property type="entry name" value="S73181"/>
</dbReference>
<dbReference type="RefSeq" id="NP_053870.1">
    <property type="nucleotide sequence ID" value="NC_000925.1"/>
</dbReference>
<dbReference type="SMR" id="P51260"/>
<dbReference type="GeneID" id="809889"/>
<dbReference type="GO" id="GO:0009535">
    <property type="term" value="C:chloroplast thylakoid membrane"/>
    <property type="evidence" value="ECO:0007669"/>
    <property type="project" value="UniProtKB-SubCell"/>
</dbReference>
<dbReference type="GO" id="GO:0045259">
    <property type="term" value="C:proton-transporting ATP synthase complex"/>
    <property type="evidence" value="ECO:0007669"/>
    <property type="project" value="UniProtKB-KW"/>
</dbReference>
<dbReference type="GO" id="GO:0005524">
    <property type="term" value="F:ATP binding"/>
    <property type="evidence" value="ECO:0007669"/>
    <property type="project" value="UniProtKB-UniRule"/>
</dbReference>
<dbReference type="GO" id="GO:0046933">
    <property type="term" value="F:proton-transporting ATP synthase activity, rotational mechanism"/>
    <property type="evidence" value="ECO:0007669"/>
    <property type="project" value="UniProtKB-UniRule"/>
</dbReference>
<dbReference type="CDD" id="cd12152">
    <property type="entry name" value="F1-ATPase_delta"/>
    <property type="match status" value="1"/>
</dbReference>
<dbReference type="FunFam" id="2.60.15.10:FF:000002">
    <property type="entry name" value="ATP synthase epsilon chain, chloroplastic"/>
    <property type="match status" value="1"/>
</dbReference>
<dbReference type="Gene3D" id="2.60.15.10">
    <property type="entry name" value="F0F1 ATP synthase delta/epsilon subunit, N-terminal"/>
    <property type="match status" value="1"/>
</dbReference>
<dbReference type="Gene3D" id="1.10.287.540">
    <property type="entry name" value="Helix hairpin bin"/>
    <property type="match status" value="1"/>
</dbReference>
<dbReference type="HAMAP" id="MF_00530">
    <property type="entry name" value="ATP_synth_epsil_bac"/>
    <property type="match status" value="1"/>
</dbReference>
<dbReference type="InterPro" id="IPR001469">
    <property type="entry name" value="ATP_synth_F1_dsu/esu"/>
</dbReference>
<dbReference type="InterPro" id="IPR020546">
    <property type="entry name" value="ATP_synth_F1_dsu/esu_N"/>
</dbReference>
<dbReference type="InterPro" id="IPR020547">
    <property type="entry name" value="ATP_synth_F1_esu_C"/>
</dbReference>
<dbReference type="InterPro" id="IPR036771">
    <property type="entry name" value="ATPsynth_dsu/esu_N"/>
</dbReference>
<dbReference type="NCBIfam" id="TIGR01216">
    <property type="entry name" value="ATP_synt_epsi"/>
    <property type="match status" value="1"/>
</dbReference>
<dbReference type="PANTHER" id="PTHR13822">
    <property type="entry name" value="ATP SYNTHASE DELTA/EPSILON CHAIN"/>
    <property type="match status" value="1"/>
</dbReference>
<dbReference type="PANTHER" id="PTHR13822:SF10">
    <property type="entry name" value="ATP SYNTHASE EPSILON CHAIN, CHLOROPLASTIC"/>
    <property type="match status" value="1"/>
</dbReference>
<dbReference type="Pfam" id="PF00401">
    <property type="entry name" value="ATP-synt_DE"/>
    <property type="match status" value="1"/>
</dbReference>
<dbReference type="Pfam" id="PF02823">
    <property type="entry name" value="ATP-synt_DE_N"/>
    <property type="match status" value="1"/>
</dbReference>
<dbReference type="SUPFAM" id="SSF51344">
    <property type="entry name" value="Epsilon subunit of F1F0-ATP synthase N-terminal domain"/>
    <property type="match status" value="1"/>
</dbReference>